<comment type="function">
    <text>Growth hormone plays an important role in growth control and is involved in the regulation of several anabolic processes. Implicated as an osmoregulatory substance important for seawater adaptation.</text>
</comment>
<comment type="subcellular location">
    <subcellularLocation>
        <location>Secreted</location>
    </subcellularLocation>
</comment>
<comment type="similarity">
    <text evidence="2">Belongs to the somatotropin/prolactin family.</text>
</comment>
<dbReference type="EMBL" id="AF086787">
    <property type="protein sequence ID" value="AAC36716.1"/>
    <property type="molecule type" value="mRNA"/>
</dbReference>
<dbReference type="SMR" id="O93566"/>
<dbReference type="OrthoDB" id="9925773at2759"/>
<dbReference type="GO" id="GO:0005615">
    <property type="term" value="C:extracellular space"/>
    <property type="evidence" value="ECO:0007669"/>
    <property type="project" value="InterPro"/>
</dbReference>
<dbReference type="GO" id="GO:0070186">
    <property type="term" value="F:growth hormone activity"/>
    <property type="evidence" value="ECO:0007669"/>
    <property type="project" value="TreeGrafter"/>
</dbReference>
<dbReference type="GO" id="GO:0005131">
    <property type="term" value="F:growth hormone receptor binding"/>
    <property type="evidence" value="ECO:0007669"/>
    <property type="project" value="InterPro"/>
</dbReference>
<dbReference type="GO" id="GO:0048513">
    <property type="term" value="P:animal organ development"/>
    <property type="evidence" value="ECO:0007669"/>
    <property type="project" value="TreeGrafter"/>
</dbReference>
<dbReference type="GO" id="GO:0060396">
    <property type="term" value="P:growth hormone receptor signaling pathway"/>
    <property type="evidence" value="ECO:0007669"/>
    <property type="project" value="TreeGrafter"/>
</dbReference>
<dbReference type="GO" id="GO:0045927">
    <property type="term" value="P:positive regulation of growth"/>
    <property type="evidence" value="ECO:0007669"/>
    <property type="project" value="TreeGrafter"/>
</dbReference>
<dbReference type="GO" id="GO:0046427">
    <property type="term" value="P:positive regulation of receptor signaling pathway via JAK-STAT"/>
    <property type="evidence" value="ECO:0007669"/>
    <property type="project" value="TreeGrafter"/>
</dbReference>
<dbReference type="GO" id="GO:0031667">
    <property type="term" value="P:response to nutrient levels"/>
    <property type="evidence" value="ECO:0007669"/>
    <property type="project" value="TreeGrafter"/>
</dbReference>
<dbReference type="CDD" id="cd10285">
    <property type="entry name" value="somatotropin_like"/>
    <property type="match status" value="1"/>
</dbReference>
<dbReference type="Gene3D" id="1.20.1250.10">
    <property type="match status" value="1"/>
</dbReference>
<dbReference type="InterPro" id="IPR009079">
    <property type="entry name" value="4_helix_cytokine-like_core"/>
</dbReference>
<dbReference type="InterPro" id="IPR034975">
    <property type="entry name" value="Somatotropin"/>
</dbReference>
<dbReference type="InterPro" id="IPR001400">
    <property type="entry name" value="Somatotropin/Prolactin"/>
</dbReference>
<dbReference type="InterPro" id="IPR018116">
    <property type="entry name" value="Somatotropin_CS"/>
</dbReference>
<dbReference type="PANTHER" id="PTHR11417:SF2">
    <property type="entry name" value="SOMATOTROPIN"/>
    <property type="match status" value="1"/>
</dbReference>
<dbReference type="PANTHER" id="PTHR11417">
    <property type="entry name" value="SOMATOTROPIN,PROLACTIN"/>
    <property type="match status" value="1"/>
</dbReference>
<dbReference type="Pfam" id="PF00103">
    <property type="entry name" value="Hormone_1"/>
    <property type="match status" value="1"/>
</dbReference>
<dbReference type="PRINTS" id="PR00836">
    <property type="entry name" value="SOMATOTROPIN"/>
</dbReference>
<dbReference type="SUPFAM" id="SSF47266">
    <property type="entry name" value="4-helical cytokines"/>
    <property type="match status" value="1"/>
</dbReference>
<dbReference type="PROSITE" id="PS00266">
    <property type="entry name" value="SOMATOTROPIN_1"/>
    <property type="match status" value="1"/>
</dbReference>
<dbReference type="PROSITE" id="PS00338">
    <property type="entry name" value="SOMATOTROPIN_2"/>
    <property type="match status" value="1"/>
</dbReference>
<keyword id="KW-1015">Disulfide bond</keyword>
<keyword id="KW-0372">Hormone</keyword>
<keyword id="KW-0873">Pyrrolidone carboxylic acid</keyword>
<keyword id="KW-0964">Secreted</keyword>
<keyword id="KW-0732">Signal</keyword>
<sequence length="203" mass="23143">MNRVILLLSVMCVGVSSQPITENQRLFSIAVGRVQYLHLVAKKLFSEFENSQLEDQHPLNKIFLQDFCHSDYFLSPIDKHETQRSSVLKLLSISYRLIECWEFSSRFLVAGFAERAQVTSKLSELKTGLMKLIEANQDGAGGFSESSVIQLTPYGNYYQSVGVDESFRLNYELFACFKKDMHKVETYLTVAKCRLSPEANCTL</sequence>
<evidence type="ECO:0000250" key="1"/>
<evidence type="ECO:0000305" key="2"/>
<organism>
    <name type="scientific">Verasper variegatus</name>
    <name type="common">Spotted flounder</name>
    <dbReference type="NCBI Taxonomy" id="82366"/>
    <lineage>
        <taxon>Eukaryota</taxon>
        <taxon>Metazoa</taxon>
        <taxon>Chordata</taxon>
        <taxon>Craniata</taxon>
        <taxon>Vertebrata</taxon>
        <taxon>Euteleostomi</taxon>
        <taxon>Actinopterygii</taxon>
        <taxon>Neopterygii</taxon>
        <taxon>Teleostei</taxon>
        <taxon>Neoteleostei</taxon>
        <taxon>Acanthomorphata</taxon>
        <taxon>Carangaria</taxon>
        <taxon>Pleuronectiformes</taxon>
        <taxon>Pleuronectoidei</taxon>
        <taxon>Pleuronectidae</taxon>
        <taxon>Verasper</taxon>
    </lineage>
</organism>
<feature type="signal peptide" evidence="1">
    <location>
        <begin position="1"/>
        <end position="17"/>
    </location>
</feature>
<feature type="chain" id="PRO_0000033060" description="Somatotropin">
    <location>
        <begin position="18"/>
        <end position="203"/>
    </location>
</feature>
<feature type="modified residue" description="Pyrrolidone carboxylic acid" evidence="1">
    <location>
        <position position="18"/>
    </location>
</feature>
<feature type="disulfide bond" evidence="1">
    <location>
        <begin position="68"/>
        <end position="176"/>
    </location>
</feature>
<feature type="disulfide bond" evidence="1">
    <location>
        <begin position="193"/>
        <end position="201"/>
    </location>
</feature>
<name>SOMA_VERVA</name>
<gene>
    <name type="primary">gh</name>
</gene>
<protein>
    <recommendedName>
        <fullName>Somatotropin</fullName>
    </recommendedName>
    <alternativeName>
        <fullName>Growth hormone</fullName>
    </alternativeName>
</protein>
<reference key="1">
    <citation type="submission" date="1998-08" db="EMBL/GenBank/DDBJ databases">
        <title>Molecular cloning of the spotted flounder (Verasper variegatus) growth hormone cDNA by polymerase chain reaction.</title>
        <authorList>
            <person name="Lee J.H."/>
            <person name="Lee S.J."/>
            <person name="Kim Y."/>
            <person name="Jeon I.G."/>
            <person name="Kim K.K."/>
            <person name="Kim K.W."/>
        </authorList>
    </citation>
    <scope>NUCLEOTIDE SEQUENCE [MRNA]</scope>
</reference>
<proteinExistence type="evidence at transcript level"/>
<accession>O93566</accession>